<evidence type="ECO:0000255" key="1"/>
<evidence type="ECO:0000305" key="2"/>
<dbReference type="EMBL" id="AJ888457">
    <property type="protein sequence ID" value="CAI59909.1"/>
    <property type="molecule type" value="Genomic_DNA"/>
</dbReference>
<dbReference type="RefSeq" id="YP_319891.1">
    <property type="nucleotide sequence ID" value="NC_007409.1"/>
</dbReference>
<dbReference type="GeneID" id="4484265"/>
<dbReference type="KEGG" id="vg:4484265"/>
<dbReference type="OrthoDB" id="10658at10239"/>
<dbReference type="Proteomes" id="UP000002150">
    <property type="component" value="Genome"/>
</dbReference>
<dbReference type="GO" id="GO:0033644">
    <property type="term" value="C:host cell membrane"/>
    <property type="evidence" value="ECO:0007669"/>
    <property type="project" value="UniProtKB-SubCell"/>
</dbReference>
<dbReference type="GO" id="GO:0016020">
    <property type="term" value="C:membrane"/>
    <property type="evidence" value="ECO:0007669"/>
    <property type="project" value="UniProtKB-KW"/>
</dbReference>
<organismHost>
    <name type="scientific">Acidianus convivator</name>
    <dbReference type="NCBI Taxonomy" id="269667"/>
</organismHost>
<sequence>MKLDRKKKRLLLKTIFSIVILILPLTFLHPTNSTVSSQNQVPIQIIYNYNVSGGVIYTAPLNIPSGFYNYYMINQYGTLLYSYLFSTNPAFVVWYEPQPTTETYYFVYGQSVTSQLVSTDVFSLYTQFYIYNSSMWNISNGVVSGGVLTLNGKNSILTENYTAPRYTSALWLYQILSPQSVSPTQIVYTSPIPPGSLIIVHVLTYTGSYQVPYPAIAQYNTPYIIAESYTSQYLTANSTHYYYYYNSLKYVGSMQQSLPFITTVSTNGLIFYSSAKNSQVLLPGATLPATSYTTNSTFIAGQLVGTGIDSYSINPSFVWCPEWIVNGSIQLLNGCKVPITGHYQLDKSTYAVILNSVFNSSDDELIAPVNSIVTVTYSNGTSYSFTVTGSSIYSGLPVPLVVVKFYGVGVTGIHISTNAFGINQQYSALIGFTDLLHTYGVLIQNGEAYSYIAGTKGPALGNVTFPMVVAVGEFAVGNTYYVFGEIVTTSRVFPFIQQSSYAIQPTIAYVNYNGTIPLVIQSVAETLSTGTYYELSGIAAMNVGQPTPINSVILSVVSQPGLEIVGSNGNVYSTIVQNTSAPNLVLVGFQGYSITLVYTNVQQNLVVTTNNFPVNLPSDMPLLVAIDQASRSITITVGQTQTQSIFMKTIPVNTTTPAVSLPIPNYPGNIIVDPESELTVISYYIIGAVAIVSMAYGTKIWIGVFIFAIS</sequence>
<accession>Q3V4Q5</accession>
<keyword id="KW-1043">Host membrane</keyword>
<keyword id="KW-0472">Membrane</keyword>
<keyword id="KW-1185">Reference proteome</keyword>
<keyword id="KW-0732">Signal</keyword>
<keyword id="KW-0812">Transmembrane</keyword>
<keyword id="KW-1133">Transmembrane helix</keyword>
<feature type="signal peptide" evidence="1">
    <location>
        <begin position="1"/>
        <end position="33"/>
    </location>
</feature>
<feature type="chain" id="PRO_0000389064" description="Putative transmembrane protein ORF710">
    <location>
        <begin position="34"/>
        <end position="710"/>
    </location>
</feature>
<feature type="transmembrane region" description="Helical" evidence="1">
    <location>
        <begin position="41"/>
        <end position="61"/>
    </location>
</feature>
<feature type="transmembrane region" description="Helical" evidence="1">
    <location>
        <begin position="76"/>
        <end position="95"/>
    </location>
</feature>
<feature type="transmembrane region" description="Helical" evidence="1">
    <location>
        <begin position="689"/>
        <end position="709"/>
    </location>
</feature>
<name>Y710_ATV</name>
<protein>
    <recommendedName>
        <fullName>Putative transmembrane protein ORF710</fullName>
    </recommendedName>
</protein>
<comment type="subcellular location">
    <subcellularLocation>
        <location evidence="2">Host membrane</location>
        <topology evidence="2">Multi-pass membrane protein</topology>
    </subcellularLocation>
</comment>
<organism>
    <name type="scientific">Acidianus two-tailed virus</name>
    <name type="common">ATV</name>
    <dbReference type="NCBI Taxonomy" id="315953"/>
    <lineage>
        <taxon>Viruses</taxon>
        <taxon>Viruses incertae sedis</taxon>
        <taxon>Bicaudaviridae</taxon>
        <taxon>Bicaudavirus</taxon>
    </lineage>
</organism>
<reference key="1">
    <citation type="journal article" date="2005" name="Nature">
        <title>Virology: independent virus development outside a host.</title>
        <authorList>
            <person name="Haring M."/>
            <person name="Vestergaard G."/>
            <person name="Rachel R."/>
            <person name="Chen L."/>
            <person name="Garrett R.A."/>
            <person name="Prangishvili D."/>
        </authorList>
    </citation>
    <scope>NUCLEOTIDE SEQUENCE [GENOMIC DNA]</scope>
</reference>
<proteinExistence type="inferred from homology"/>